<dbReference type="GO" id="GO:0005576">
    <property type="term" value="C:extracellular region"/>
    <property type="evidence" value="ECO:0007669"/>
    <property type="project" value="UniProtKB-SubCell"/>
</dbReference>
<dbReference type="GO" id="GO:0030414">
    <property type="term" value="F:peptidase inhibitor activity"/>
    <property type="evidence" value="ECO:0007669"/>
    <property type="project" value="UniProtKB-KW"/>
</dbReference>
<dbReference type="GO" id="GO:0090729">
    <property type="term" value="F:toxin activity"/>
    <property type="evidence" value="ECO:0007669"/>
    <property type="project" value="UniProtKB-KW"/>
</dbReference>
<dbReference type="GO" id="GO:0008217">
    <property type="term" value="P:regulation of blood pressure"/>
    <property type="evidence" value="ECO:0007669"/>
    <property type="project" value="UniProtKB-KW"/>
</dbReference>
<name>BP11C_CROVV</name>
<organism>
    <name type="scientific">Crotalus viridis viridis</name>
    <name type="common">Prairie rattlesnake</name>
    <dbReference type="NCBI Taxonomy" id="8742"/>
    <lineage>
        <taxon>Eukaryota</taxon>
        <taxon>Metazoa</taxon>
        <taxon>Chordata</taxon>
        <taxon>Craniata</taxon>
        <taxon>Vertebrata</taxon>
        <taxon>Euteleostomi</taxon>
        <taxon>Lepidosauria</taxon>
        <taxon>Squamata</taxon>
        <taxon>Bifurcata</taxon>
        <taxon>Unidentata</taxon>
        <taxon>Episquamata</taxon>
        <taxon>Toxicofera</taxon>
        <taxon>Serpentes</taxon>
        <taxon>Colubroidea</taxon>
        <taxon>Viperidae</taxon>
        <taxon>Crotalinae</taxon>
        <taxon>Crotalus</taxon>
    </lineage>
</organism>
<evidence type="ECO:0000250" key="1"/>
<evidence type="ECO:0000269" key="2">
    <source>
    </source>
</evidence>
<evidence type="ECO:0000305" key="3"/>
<sequence length="11" mass="1080">QSAPGNEAIPP</sequence>
<feature type="peptide" id="PRO_0000335879" description="Bradykinin-potentiating peptide 11c">
    <location>
        <begin position="1"/>
        <end position="11"/>
    </location>
</feature>
<feature type="modified residue" description="Pyrrolidone carboxylic acid" evidence="2">
    <location>
        <position position="1"/>
    </location>
</feature>
<protein>
    <recommendedName>
        <fullName>Bradykinin-potentiating peptide 11c</fullName>
        <shortName>BPP-11c</shortName>
    </recommendedName>
</protein>
<comment type="function">
    <text evidence="1">This peptide both inhibits the activity of the angiotensin-converting enzyme (ACE) and enhances the action of bradykinin by inhibiting the peptidases that inactivate it. It acts as an indirect hypotensive agent (By similarity).</text>
</comment>
<comment type="subcellular location">
    <subcellularLocation>
        <location evidence="2">Secreted</location>
    </subcellularLocation>
</comment>
<comment type="tissue specificity">
    <text evidence="2">Expressed by the venom gland.</text>
</comment>
<comment type="mass spectrometry" mass="1063.63" method="MALDI" evidence="2"/>
<comment type="similarity">
    <text evidence="3">Belongs to the bradykinin-potentiating peptide family.</text>
</comment>
<accession>P0C7K3</accession>
<keyword id="KW-0903">Direct protein sequencing</keyword>
<keyword id="KW-0382">Hypotensive agent</keyword>
<keyword id="KW-0481">Metalloenzyme inhibitor</keyword>
<keyword id="KW-0483">Metalloprotease inhibitor</keyword>
<keyword id="KW-0646">Protease inhibitor</keyword>
<keyword id="KW-0873">Pyrrolidone carboxylic acid</keyword>
<keyword id="KW-0964">Secreted</keyword>
<keyword id="KW-0800">Toxin</keyword>
<reference key="1">
    <citation type="journal article" date="2005" name="Rapid Commun. Mass Spectrom.">
        <title>Fast analysis of low molecular mass compounds present in snake venom: identification of ten new pyroglutamate-containing peptides.</title>
        <authorList>
            <person name="Wermelinger L.S."/>
            <person name="Dutra D.L."/>
            <person name="Oliveira-Carvalho A.L."/>
            <person name="Soares M.R."/>
            <person name="Bloch C. Jr."/>
            <person name="Zingali R.B."/>
        </authorList>
    </citation>
    <scope>PROTEIN SEQUENCE</scope>
    <scope>SUBCELLULAR LOCATION</scope>
    <scope>TISSUE SPECIFICITY</scope>
    <scope>MASS SPECTROMETRY</scope>
    <scope>PYROGLUTAMATE FORMATION AT GLN-1</scope>
    <source>
        <tissue>Venom</tissue>
    </source>
</reference>
<proteinExistence type="evidence at protein level"/>